<name>LCYE_ARATH</name>
<comment type="function">
    <text evidence="2 3 4">Involved in carotenoid biosynthesis. Catalyzes the single epsilon-cyclization reaction which converts lycopene to delta-carotene and neurosporene to alpha-zeacarotene (PubMed:11226339, PubMed:8837512). Required for lutein biosynthesis (PubMed:9789087).</text>
</comment>
<comment type="catalytic activity">
    <reaction evidence="2 3">
        <text>a carotenoid psi-end group = a carotenoid epsilon-end group</text>
        <dbReference type="Rhea" id="RHEA:55616"/>
        <dbReference type="ChEBI" id="CHEBI:139114"/>
        <dbReference type="ChEBI" id="CHEBI:139115"/>
        <dbReference type="EC" id="5.5.1.18"/>
    </reaction>
</comment>
<comment type="pathway">
    <text evidence="7">Carotenoid biosynthesis; alpha-zeacarotene biosynthesis.</text>
</comment>
<comment type="pathway">
    <text evidence="7">Carotenoid biosynthesis; delta-carotene biosynthesis.</text>
</comment>
<comment type="subcellular location">
    <subcellularLocation>
        <location evidence="1">Plastid</location>
        <location evidence="1">Chloroplast membrane</location>
        <topology evidence="1">Multi-pass membrane protein</topology>
    </subcellularLocation>
</comment>
<comment type="disruption phenotype">
    <text evidence="4">Delayed greening and virescent seedlings.</text>
</comment>
<comment type="similarity">
    <text evidence="7">Belongs to the lycopene cyclase family.</text>
</comment>
<reference key="1">
    <citation type="journal article" date="1996" name="Plant Cell">
        <title>Functional analysis of the beta and epsilon lycopene cyclase enzymes of Arabidopsis reveals a mechanism for control of cyclic carotenoid formation.</title>
        <authorList>
            <person name="Cunningham F.X. Jr."/>
            <person name="Pogson B."/>
            <person name="Sun Z."/>
            <person name="McDonald K.A."/>
            <person name="Dellapenna D."/>
            <person name="Gantt E."/>
        </authorList>
    </citation>
    <scope>NUCLEOTIDE SEQUENCE [MRNA]</scope>
    <scope>FUNCTION</scope>
    <scope>CATALYTIC ACTIVITY</scope>
    <source>
        <strain>cv. Columbia</strain>
    </source>
</reference>
<reference key="2">
    <citation type="submission" date="1998-12" db="EMBL/GenBank/DDBJ databases">
        <title>Gene structure and regulation of the carotenoid biosynthesis pathway in Arabidopsis thaliana.</title>
        <authorList>
            <person name="Giuliano G."/>
            <person name="Rosati C."/>
            <person name="Santangelo G."/>
        </authorList>
    </citation>
    <scope>NUCLEOTIDE SEQUENCE [GENOMIC DNA]</scope>
</reference>
<reference key="3">
    <citation type="journal article" date="2000" name="DNA Res.">
        <title>Structural analysis of Arabidopsis thaliana chromosome 5. X. Sequence features of the regions of 3,076,755 bp covered by sixty P1 and TAC clones.</title>
        <authorList>
            <person name="Sato S."/>
            <person name="Nakamura Y."/>
            <person name="Kaneko T."/>
            <person name="Katoh T."/>
            <person name="Asamizu E."/>
            <person name="Kotani H."/>
            <person name="Tabata S."/>
        </authorList>
    </citation>
    <scope>NUCLEOTIDE SEQUENCE [LARGE SCALE GENOMIC DNA]</scope>
    <source>
        <strain>cv. Columbia</strain>
    </source>
</reference>
<reference key="4">
    <citation type="journal article" date="2017" name="Plant J.">
        <title>Araport11: a complete reannotation of the Arabidopsis thaliana reference genome.</title>
        <authorList>
            <person name="Cheng C.Y."/>
            <person name="Krishnakumar V."/>
            <person name="Chan A.P."/>
            <person name="Thibaud-Nissen F."/>
            <person name="Schobel S."/>
            <person name="Town C.D."/>
        </authorList>
    </citation>
    <scope>GENOME REANNOTATION</scope>
    <source>
        <strain>cv. Columbia</strain>
    </source>
</reference>
<reference key="5">
    <citation type="journal article" date="2003" name="Science">
        <title>Empirical analysis of transcriptional activity in the Arabidopsis genome.</title>
        <authorList>
            <person name="Yamada K."/>
            <person name="Lim J."/>
            <person name="Dale J.M."/>
            <person name="Chen H."/>
            <person name="Shinn P."/>
            <person name="Palm C.J."/>
            <person name="Southwick A.M."/>
            <person name="Wu H.C."/>
            <person name="Kim C.J."/>
            <person name="Nguyen M."/>
            <person name="Pham P.K."/>
            <person name="Cheuk R.F."/>
            <person name="Karlin-Newmann G."/>
            <person name="Liu S.X."/>
            <person name="Lam B."/>
            <person name="Sakano H."/>
            <person name="Wu T."/>
            <person name="Yu G."/>
            <person name="Miranda M."/>
            <person name="Quach H.L."/>
            <person name="Tripp M."/>
            <person name="Chang C.H."/>
            <person name="Lee J.M."/>
            <person name="Toriumi M.J."/>
            <person name="Chan M.M."/>
            <person name="Tang C.C."/>
            <person name="Onodera C.S."/>
            <person name="Deng J.M."/>
            <person name="Akiyama K."/>
            <person name="Ansari Y."/>
            <person name="Arakawa T."/>
            <person name="Banh J."/>
            <person name="Banno F."/>
            <person name="Bowser L."/>
            <person name="Brooks S.Y."/>
            <person name="Carninci P."/>
            <person name="Chao Q."/>
            <person name="Choy N."/>
            <person name="Enju A."/>
            <person name="Goldsmith A.D."/>
            <person name="Gurjal M."/>
            <person name="Hansen N.F."/>
            <person name="Hayashizaki Y."/>
            <person name="Johnson-Hopson C."/>
            <person name="Hsuan V.W."/>
            <person name="Iida K."/>
            <person name="Karnes M."/>
            <person name="Khan S."/>
            <person name="Koesema E."/>
            <person name="Ishida J."/>
            <person name="Jiang P.X."/>
            <person name="Jones T."/>
            <person name="Kawai J."/>
            <person name="Kamiya A."/>
            <person name="Meyers C."/>
            <person name="Nakajima M."/>
            <person name="Narusaka M."/>
            <person name="Seki M."/>
            <person name="Sakurai T."/>
            <person name="Satou M."/>
            <person name="Tamse R."/>
            <person name="Vaysberg M."/>
            <person name="Wallender E.K."/>
            <person name="Wong C."/>
            <person name="Yamamura Y."/>
            <person name="Yuan S."/>
            <person name="Shinozaki K."/>
            <person name="Davis R.W."/>
            <person name="Theologis A."/>
            <person name="Ecker J.R."/>
        </authorList>
    </citation>
    <scope>NUCLEOTIDE SEQUENCE [LARGE SCALE MRNA]</scope>
    <source>
        <strain>cv. Columbia</strain>
    </source>
</reference>
<reference key="6">
    <citation type="journal article" date="1998" name="Proc. Natl. Acad. Sci. U.S.A.">
        <title>Altered xanthophyll compositions adversely affect chlorophyll accumulation and nonphotochemical quenching in Arabidopsis mutants.</title>
        <authorList>
            <person name="Pogson B.J."/>
            <person name="Niyogi K.K."/>
            <person name="Bjoerkman O."/>
            <person name="DellaPenna D."/>
        </authorList>
    </citation>
    <scope>FUNCTION</scope>
    <scope>DISRUPTION PHENOTYPE</scope>
</reference>
<reference key="7">
    <citation type="journal article" date="2001" name="Proc. Natl. Acad. Sci. U.S.A.">
        <title>One ring or two? Determination of ring number in carotenoids by lycopene epsilon-cyclases.</title>
        <authorList>
            <person name="Cunningham F.X. Jr."/>
            <person name="Gantt E."/>
        </authorList>
    </citation>
    <scope>FUNCTION</scope>
    <scope>CATALYTIC ACTIVITY</scope>
    <scope>MUTAGENESIS OF ALA-447; 447-ALA--PHE-452 AND LEU-448</scope>
</reference>
<evidence type="ECO:0000255" key="1"/>
<evidence type="ECO:0000269" key="2">
    <source>
    </source>
</evidence>
<evidence type="ECO:0000269" key="3">
    <source>
    </source>
</evidence>
<evidence type="ECO:0000269" key="4">
    <source>
    </source>
</evidence>
<evidence type="ECO:0000303" key="5">
    <source>
    </source>
</evidence>
<evidence type="ECO:0000303" key="6">
    <source>
    </source>
</evidence>
<evidence type="ECO:0000305" key="7"/>
<evidence type="ECO:0000312" key="8">
    <source>
        <dbReference type="Araport" id="AT5G57030"/>
    </source>
</evidence>
<evidence type="ECO:0000312" key="9">
    <source>
        <dbReference type="EMBL" id="BAA97033.1"/>
    </source>
</evidence>
<organism>
    <name type="scientific">Arabidopsis thaliana</name>
    <name type="common">Mouse-ear cress</name>
    <dbReference type="NCBI Taxonomy" id="3702"/>
    <lineage>
        <taxon>Eukaryota</taxon>
        <taxon>Viridiplantae</taxon>
        <taxon>Streptophyta</taxon>
        <taxon>Embryophyta</taxon>
        <taxon>Tracheophyta</taxon>
        <taxon>Spermatophyta</taxon>
        <taxon>Magnoliopsida</taxon>
        <taxon>eudicotyledons</taxon>
        <taxon>Gunneridae</taxon>
        <taxon>Pentapetalae</taxon>
        <taxon>rosids</taxon>
        <taxon>malvids</taxon>
        <taxon>Brassicales</taxon>
        <taxon>Brassicaceae</taxon>
        <taxon>Camelineae</taxon>
        <taxon>Arabidopsis</taxon>
    </lineage>
</organism>
<proteinExistence type="evidence at protein level"/>
<keyword id="KW-0125">Carotenoid biosynthesis</keyword>
<keyword id="KW-0150">Chloroplast</keyword>
<keyword id="KW-0413">Isomerase</keyword>
<keyword id="KW-0472">Membrane</keyword>
<keyword id="KW-0520">NAD</keyword>
<keyword id="KW-0934">Plastid</keyword>
<keyword id="KW-1185">Reference proteome</keyword>
<keyword id="KW-0809">Transit peptide</keyword>
<keyword id="KW-0812">Transmembrane</keyword>
<keyword id="KW-1133">Transmembrane helix</keyword>
<feature type="transit peptide" description="Chloroplast" evidence="1">
    <location>
        <begin position="1"/>
        <end position="45"/>
    </location>
</feature>
<feature type="chain" id="PRO_0000018434" description="Lycopene epsilon cyclase, chloroplastic">
    <location>
        <begin position="46"/>
        <end position="524"/>
    </location>
</feature>
<feature type="transmembrane region" description="Helical" evidence="1">
    <location>
        <begin position="441"/>
        <end position="461"/>
    </location>
</feature>
<feature type="transmembrane region" description="Helical" evidence="1">
    <location>
        <begin position="475"/>
        <end position="495"/>
    </location>
</feature>
<feature type="binding site" evidence="1">
    <location>
        <begin position="111"/>
        <end position="139"/>
    </location>
    <ligand>
        <name>NAD(+)</name>
        <dbReference type="ChEBI" id="CHEBI:57540"/>
    </ligand>
</feature>
<feature type="mutagenesis site" description="Converts the enzyme from a mono- to a bi-epsilon-cyclase." evidence="2">
    <original>ALIVQF</original>
    <variation>HIVLM</variation>
    <location>
        <begin position="447"/>
        <end position="452"/>
    </location>
</feature>
<feature type="mutagenesis site" description="No effect on catalytic activity." evidence="2">
    <original>A</original>
    <variation>D</variation>
    <location>
        <position position="447"/>
    </location>
</feature>
<feature type="mutagenesis site" description="Partial loss of catalytic activity." evidence="2">
    <original>L</original>
    <variation>D</variation>
    <location>
        <position position="448"/>
    </location>
</feature>
<feature type="mutagenesis site" description="Converts the enzyme from a mono- to a bi-epsilon-cyclase." evidence="2">
    <original>L</original>
    <variation>H</variation>
    <variation>R</variation>
    <location>
        <position position="448"/>
    </location>
</feature>
<feature type="sequence conflict" description="In Ref. 1; AAB53336." evidence="7" ref="1">
    <original>L</original>
    <variation>H</variation>
    <location>
        <position position="111"/>
    </location>
</feature>
<protein>
    <recommendedName>
        <fullName evidence="5">Lycopene epsilon cyclase, chloroplastic</fullName>
        <ecNumber evidence="2 3">5.5.1.18</ecNumber>
    </recommendedName>
    <alternativeName>
        <fullName evidence="6">Protein LUTEIN DEFICIENT 2</fullName>
    </alternativeName>
</protein>
<gene>
    <name evidence="6" type="primary">LUT2</name>
    <name evidence="8" type="ordered locus">At5g57030</name>
    <name evidence="9" type="ORF">MHM17.16</name>
</gene>
<accession>Q38932</accession>
<accession>Q9LDV8</accession>
<dbReference type="EC" id="5.5.1.18" evidence="2 3"/>
<dbReference type="EMBL" id="U50738">
    <property type="protein sequence ID" value="AAB53336.1"/>
    <property type="molecule type" value="mRNA"/>
</dbReference>
<dbReference type="EMBL" id="AF117257">
    <property type="protein sequence ID" value="AAF82389.1"/>
    <property type="molecule type" value="Genomic_DNA"/>
</dbReference>
<dbReference type="EMBL" id="AB024035">
    <property type="protein sequence ID" value="BAA97033.1"/>
    <property type="molecule type" value="Genomic_DNA"/>
</dbReference>
<dbReference type="EMBL" id="CP002688">
    <property type="protein sequence ID" value="AED96836.1"/>
    <property type="molecule type" value="Genomic_DNA"/>
</dbReference>
<dbReference type="EMBL" id="AY040024">
    <property type="protein sequence ID" value="AAK64181.1"/>
    <property type="molecule type" value="mRNA"/>
</dbReference>
<dbReference type="EMBL" id="AY079371">
    <property type="protein sequence ID" value="AAL85102.1"/>
    <property type="molecule type" value="mRNA"/>
</dbReference>
<dbReference type="RefSeq" id="NP_200513.1">
    <property type="nucleotide sequence ID" value="NM_125085.5"/>
</dbReference>
<dbReference type="SMR" id="Q38932"/>
<dbReference type="FunCoup" id="Q38932">
    <property type="interactions" value="412"/>
</dbReference>
<dbReference type="STRING" id="3702.Q38932"/>
<dbReference type="PaxDb" id="3702-AT5G57030.1"/>
<dbReference type="ProteomicsDB" id="237157"/>
<dbReference type="EnsemblPlants" id="AT5G57030.1">
    <property type="protein sequence ID" value="AT5G57030.1"/>
    <property type="gene ID" value="AT5G57030"/>
</dbReference>
<dbReference type="GeneID" id="835806"/>
<dbReference type="Gramene" id="AT5G57030.1">
    <property type="protein sequence ID" value="AT5G57030.1"/>
    <property type="gene ID" value="AT5G57030"/>
</dbReference>
<dbReference type="KEGG" id="ath:AT5G57030"/>
<dbReference type="Araport" id="AT5G57030"/>
<dbReference type="TAIR" id="AT5G57030">
    <property type="gene designation" value="LUT2"/>
</dbReference>
<dbReference type="eggNOG" id="ENOG502QT61">
    <property type="taxonomic scope" value="Eukaryota"/>
</dbReference>
<dbReference type="HOGENOM" id="CLU_032956_1_0_1"/>
<dbReference type="InParanoid" id="Q38932"/>
<dbReference type="OMA" id="QTCYGIV"/>
<dbReference type="PhylomeDB" id="Q38932"/>
<dbReference type="BioCyc" id="ARA:AT5G57030-MONOMER"/>
<dbReference type="BioCyc" id="MetaCyc:AT5G57030-MONOMER"/>
<dbReference type="BRENDA" id="5.5.1.18">
    <property type="organism ID" value="399"/>
</dbReference>
<dbReference type="UniPathway" id="UPA00801"/>
<dbReference type="UniPathway" id="UPA00804"/>
<dbReference type="PRO" id="PR:Q38932"/>
<dbReference type="Proteomes" id="UP000006548">
    <property type="component" value="Chromosome 5"/>
</dbReference>
<dbReference type="ExpressionAtlas" id="Q38932">
    <property type="expression patterns" value="baseline and differential"/>
</dbReference>
<dbReference type="GO" id="GO:0031969">
    <property type="term" value="C:chloroplast membrane"/>
    <property type="evidence" value="ECO:0007669"/>
    <property type="project" value="UniProtKB-SubCell"/>
</dbReference>
<dbReference type="GO" id="GO:0045435">
    <property type="term" value="F:lycopene epsilon cyclase activity"/>
    <property type="evidence" value="ECO:0000304"/>
    <property type="project" value="TAIR"/>
</dbReference>
<dbReference type="GO" id="GO:0016705">
    <property type="term" value="F:oxidoreductase activity, acting on paired donors, with incorporation or reduction of molecular oxygen"/>
    <property type="evidence" value="ECO:0007669"/>
    <property type="project" value="InterPro"/>
</dbReference>
<dbReference type="GO" id="GO:0016117">
    <property type="term" value="P:carotenoid biosynthetic process"/>
    <property type="evidence" value="ECO:0000315"/>
    <property type="project" value="TAIR"/>
</dbReference>
<dbReference type="GO" id="GO:0016123">
    <property type="term" value="P:xanthophyll biosynthetic process"/>
    <property type="evidence" value="ECO:0000316"/>
    <property type="project" value="TAIR"/>
</dbReference>
<dbReference type="FunFam" id="3.50.50.60:FF:000101">
    <property type="entry name" value="lycopene epsilon cyclase, chloroplastic"/>
    <property type="match status" value="1"/>
</dbReference>
<dbReference type="Gene3D" id="3.50.50.60">
    <property type="entry name" value="FAD/NAD(P)-binding domain"/>
    <property type="match status" value="1"/>
</dbReference>
<dbReference type="InterPro" id="IPR036188">
    <property type="entry name" value="FAD/NAD-bd_sf"/>
</dbReference>
<dbReference type="InterPro" id="IPR010108">
    <property type="entry name" value="Lycopene_cyclase_b/e"/>
</dbReference>
<dbReference type="NCBIfam" id="TIGR01790">
    <property type="entry name" value="carotene-cycl"/>
    <property type="match status" value="1"/>
</dbReference>
<dbReference type="PANTHER" id="PTHR39757">
    <property type="match status" value="1"/>
</dbReference>
<dbReference type="PANTHER" id="PTHR39757:SF3">
    <property type="entry name" value="LYCOPENE EPSILON CYCLASE, CHLOROPLASTIC"/>
    <property type="match status" value="1"/>
</dbReference>
<dbReference type="Pfam" id="PF05834">
    <property type="entry name" value="Lycopene_cycl"/>
    <property type="match status" value="1"/>
</dbReference>
<dbReference type="SUPFAM" id="SSF51905">
    <property type="entry name" value="FAD/NAD(P)-binding domain"/>
    <property type="match status" value="1"/>
</dbReference>
<sequence>MECVGARNFAAMAVSTFPSWSCRRKFPVVKRYSYRNIRFGLCSVRASGGGSSGSESCVAVREDFADEEDFVKAGGSEILFVQMQQNKDMDEQSKLVDKLPPISIGDGALDLVVIGCGPAGLALAAESAKLGLKVGLIGPDLPFTNNYGVWEDEFNDLGLQKCIEHVWRETIVYLDDDKPITIGRAYGRVSRRLLHEELLRRCVESGVSYLSSKVDSITEASDGLRLVACDDNNVIPCRLATVASGAASGKLLQYEVGGPRVCVQTAYGVEVEVENSPYDPDQMVFMDYRDYTNEKVRSLEAEYPTFLYAMPMTKSRLFFEETCLASKDVMPFDLLKTKLMLRLDTLGIRILKTYEEEWSYIPVGGSLPNTEQKNLAFGAAASMVHPATGYSVVRSLSEAPKYASVIAEILREETTKQINSNISRQAWDTLWPPERKRQRAFFLFGLALIVQFDTEGIRSFFRTFFRLPKWMWQGFLGSTLTSGDLVLFALYMFVISPNNLRKGLINHLISDPTGATMIKTYLKV</sequence>